<organism>
    <name type="scientific">Rhizobium etli (strain ATCC 51251 / DSM 11541 / JCM 21823 / NBRC 15573 / CFN 42)</name>
    <dbReference type="NCBI Taxonomy" id="347834"/>
    <lineage>
        <taxon>Bacteria</taxon>
        <taxon>Pseudomonadati</taxon>
        <taxon>Pseudomonadota</taxon>
        <taxon>Alphaproteobacteria</taxon>
        <taxon>Hyphomicrobiales</taxon>
        <taxon>Rhizobiaceae</taxon>
        <taxon>Rhizobium/Agrobacterium group</taxon>
        <taxon>Rhizobium</taxon>
    </lineage>
</organism>
<comment type="function">
    <text evidence="1">Catalyzes the oxidation of 5,10-methylenetetrahydrofolate to 5,10-methenyltetrahydrofolate and then the hydrolysis of 5,10-methenyltetrahydrofolate to 10-formyltetrahydrofolate.</text>
</comment>
<comment type="catalytic activity">
    <reaction evidence="1">
        <text>(6R)-5,10-methylene-5,6,7,8-tetrahydrofolate + NADP(+) = (6R)-5,10-methenyltetrahydrofolate + NADPH</text>
        <dbReference type="Rhea" id="RHEA:22812"/>
        <dbReference type="ChEBI" id="CHEBI:15636"/>
        <dbReference type="ChEBI" id="CHEBI:57455"/>
        <dbReference type="ChEBI" id="CHEBI:57783"/>
        <dbReference type="ChEBI" id="CHEBI:58349"/>
        <dbReference type="EC" id="1.5.1.5"/>
    </reaction>
</comment>
<comment type="catalytic activity">
    <reaction evidence="1">
        <text>(6R)-5,10-methenyltetrahydrofolate + H2O = (6R)-10-formyltetrahydrofolate + H(+)</text>
        <dbReference type="Rhea" id="RHEA:23700"/>
        <dbReference type="ChEBI" id="CHEBI:15377"/>
        <dbReference type="ChEBI" id="CHEBI:15378"/>
        <dbReference type="ChEBI" id="CHEBI:57455"/>
        <dbReference type="ChEBI" id="CHEBI:195366"/>
        <dbReference type="EC" id="3.5.4.9"/>
    </reaction>
</comment>
<comment type="pathway">
    <text evidence="1">One-carbon metabolism; tetrahydrofolate interconversion.</text>
</comment>
<comment type="subunit">
    <text evidence="1">Homodimer.</text>
</comment>
<comment type="similarity">
    <text evidence="1">Belongs to the tetrahydrofolate dehydrogenase/cyclohydrolase family.</text>
</comment>
<name>FOLD2_RHIEC</name>
<keyword id="KW-0028">Amino-acid biosynthesis</keyword>
<keyword id="KW-0368">Histidine biosynthesis</keyword>
<keyword id="KW-0378">Hydrolase</keyword>
<keyword id="KW-0486">Methionine biosynthesis</keyword>
<keyword id="KW-0511">Multifunctional enzyme</keyword>
<keyword id="KW-0521">NADP</keyword>
<keyword id="KW-0554">One-carbon metabolism</keyword>
<keyword id="KW-0560">Oxidoreductase</keyword>
<keyword id="KW-0614">Plasmid</keyword>
<keyword id="KW-0658">Purine biosynthesis</keyword>
<keyword id="KW-1185">Reference proteome</keyword>
<reference key="1">
    <citation type="journal article" date="2006" name="Proc. Natl. Acad. Sci. U.S.A.">
        <title>The partitioned Rhizobium etli genome: genetic and metabolic redundancy in seven interacting replicons.</title>
        <authorList>
            <person name="Gonzalez V."/>
            <person name="Santamaria R.I."/>
            <person name="Bustos P."/>
            <person name="Hernandez-Gonzalez I."/>
            <person name="Medrano-Soto A."/>
            <person name="Moreno-Hagelsieb G."/>
            <person name="Janga S.C."/>
            <person name="Ramirez M.A."/>
            <person name="Jimenez-Jacinto V."/>
            <person name="Collado-Vides J."/>
            <person name="Davila G."/>
        </authorList>
    </citation>
    <scope>NUCLEOTIDE SEQUENCE [LARGE SCALE GENOMIC DNA]</scope>
    <source>
        <strain>ATCC 51251 / DSM 11541 / JCM 21823 / NBRC 15573 / CFN 42</strain>
    </source>
</reference>
<feature type="chain" id="PRO_0000268460" description="Bifunctional protein FolD 2">
    <location>
        <begin position="1"/>
        <end position="299"/>
    </location>
</feature>
<feature type="binding site" evidence="1">
    <location>
        <begin position="168"/>
        <end position="170"/>
    </location>
    <ligand>
        <name>NADP(+)</name>
        <dbReference type="ChEBI" id="CHEBI:58349"/>
    </ligand>
</feature>
<feature type="binding site" evidence="1">
    <location>
        <position position="193"/>
    </location>
    <ligand>
        <name>NADP(+)</name>
        <dbReference type="ChEBI" id="CHEBI:58349"/>
    </ligand>
</feature>
<feature type="binding site" evidence="1">
    <location>
        <position position="234"/>
    </location>
    <ligand>
        <name>NADP(+)</name>
        <dbReference type="ChEBI" id="CHEBI:58349"/>
    </ligand>
</feature>
<geneLocation type="plasmid">
    <name>p42e</name>
</geneLocation>
<accession>Q2JZV0</accession>
<dbReference type="EC" id="1.5.1.5" evidence="1"/>
<dbReference type="EC" id="3.5.4.9" evidence="1"/>
<dbReference type="EMBL" id="CP000137">
    <property type="protein sequence ID" value="ABC93851.1"/>
    <property type="molecule type" value="Genomic_DNA"/>
</dbReference>
<dbReference type="SMR" id="Q2JZV0"/>
<dbReference type="KEGG" id="ret:RHE_PE00416"/>
<dbReference type="HOGENOM" id="CLU_034045_1_2_5"/>
<dbReference type="OrthoDB" id="9803580at2"/>
<dbReference type="UniPathway" id="UPA00193"/>
<dbReference type="Proteomes" id="UP000001936">
    <property type="component" value="Plasmid p42e"/>
</dbReference>
<dbReference type="GO" id="GO:0005829">
    <property type="term" value="C:cytosol"/>
    <property type="evidence" value="ECO:0007669"/>
    <property type="project" value="TreeGrafter"/>
</dbReference>
<dbReference type="GO" id="GO:0004477">
    <property type="term" value="F:methenyltetrahydrofolate cyclohydrolase activity"/>
    <property type="evidence" value="ECO:0007669"/>
    <property type="project" value="UniProtKB-UniRule"/>
</dbReference>
<dbReference type="GO" id="GO:0004488">
    <property type="term" value="F:methylenetetrahydrofolate dehydrogenase (NADP+) activity"/>
    <property type="evidence" value="ECO:0007669"/>
    <property type="project" value="UniProtKB-UniRule"/>
</dbReference>
<dbReference type="GO" id="GO:0000105">
    <property type="term" value="P:L-histidine biosynthetic process"/>
    <property type="evidence" value="ECO:0007669"/>
    <property type="project" value="UniProtKB-KW"/>
</dbReference>
<dbReference type="GO" id="GO:0009086">
    <property type="term" value="P:methionine biosynthetic process"/>
    <property type="evidence" value="ECO:0007669"/>
    <property type="project" value="UniProtKB-KW"/>
</dbReference>
<dbReference type="GO" id="GO:0006164">
    <property type="term" value="P:purine nucleotide biosynthetic process"/>
    <property type="evidence" value="ECO:0007669"/>
    <property type="project" value="UniProtKB-KW"/>
</dbReference>
<dbReference type="GO" id="GO:0035999">
    <property type="term" value="P:tetrahydrofolate interconversion"/>
    <property type="evidence" value="ECO:0007669"/>
    <property type="project" value="UniProtKB-UniRule"/>
</dbReference>
<dbReference type="CDD" id="cd01080">
    <property type="entry name" value="NAD_bind_m-THF_DH_Cyclohyd"/>
    <property type="match status" value="1"/>
</dbReference>
<dbReference type="FunFam" id="3.40.50.720:FF:000006">
    <property type="entry name" value="Bifunctional protein FolD"/>
    <property type="match status" value="1"/>
</dbReference>
<dbReference type="FunFam" id="3.40.50.10860:FF:000005">
    <property type="entry name" value="C-1-tetrahydrofolate synthase, cytoplasmic, putative"/>
    <property type="match status" value="1"/>
</dbReference>
<dbReference type="Gene3D" id="3.40.50.10860">
    <property type="entry name" value="Leucine Dehydrogenase, chain A, domain 1"/>
    <property type="match status" value="1"/>
</dbReference>
<dbReference type="Gene3D" id="3.40.50.720">
    <property type="entry name" value="NAD(P)-binding Rossmann-like Domain"/>
    <property type="match status" value="1"/>
</dbReference>
<dbReference type="HAMAP" id="MF_01576">
    <property type="entry name" value="THF_DHG_CYH"/>
    <property type="match status" value="1"/>
</dbReference>
<dbReference type="InterPro" id="IPR046346">
    <property type="entry name" value="Aminoacid_DH-like_N_sf"/>
</dbReference>
<dbReference type="InterPro" id="IPR036291">
    <property type="entry name" value="NAD(P)-bd_dom_sf"/>
</dbReference>
<dbReference type="InterPro" id="IPR000672">
    <property type="entry name" value="THF_DH/CycHdrlase"/>
</dbReference>
<dbReference type="InterPro" id="IPR020630">
    <property type="entry name" value="THF_DH/CycHdrlase_cat_dom"/>
</dbReference>
<dbReference type="InterPro" id="IPR020867">
    <property type="entry name" value="THF_DH/CycHdrlase_CS"/>
</dbReference>
<dbReference type="InterPro" id="IPR020631">
    <property type="entry name" value="THF_DH/CycHdrlase_NAD-bd_dom"/>
</dbReference>
<dbReference type="NCBIfam" id="NF010783">
    <property type="entry name" value="PRK14186.1"/>
    <property type="match status" value="1"/>
</dbReference>
<dbReference type="NCBIfam" id="NF010785">
    <property type="entry name" value="PRK14188.1"/>
    <property type="match status" value="1"/>
</dbReference>
<dbReference type="PANTHER" id="PTHR48099:SF5">
    <property type="entry name" value="C-1-TETRAHYDROFOLATE SYNTHASE, CYTOPLASMIC"/>
    <property type="match status" value="1"/>
</dbReference>
<dbReference type="PANTHER" id="PTHR48099">
    <property type="entry name" value="C-1-TETRAHYDROFOLATE SYNTHASE, CYTOPLASMIC-RELATED"/>
    <property type="match status" value="1"/>
</dbReference>
<dbReference type="Pfam" id="PF00763">
    <property type="entry name" value="THF_DHG_CYH"/>
    <property type="match status" value="1"/>
</dbReference>
<dbReference type="Pfam" id="PF02882">
    <property type="entry name" value="THF_DHG_CYH_C"/>
    <property type="match status" value="1"/>
</dbReference>
<dbReference type="PRINTS" id="PR00085">
    <property type="entry name" value="THFDHDRGNASE"/>
</dbReference>
<dbReference type="SUPFAM" id="SSF53223">
    <property type="entry name" value="Aminoacid dehydrogenase-like, N-terminal domain"/>
    <property type="match status" value="1"/>
</dbReference>
<dbReference type="SUPFAM" id="SSF51735">
    <property type="entry name" value="NAD(P)-binding Rossmann-fold domains"/>
    <property type="match status" value="1"/>
</dbReference>
<dbReference type="PROSITE" id="PS00767">
    <property type="entry name" value="THF_DHG_CYH_2"/>
    <property type="match status" value="1"/>
</dbReference>
<evidence type="ECO:0000255" key="1">
    <source>
        <dbReference type="HAMAP-Rule" id="MF_01576"/>
    </source>
</evidence>
<proteinExistence type="inferred from homology"/>
<protein>
    <recommendedName>
        <fullName evidence="1">Bifunctional protein FolD 2</fullName>
    </recommendedName>
    <domain>
        <recommendedName>
            <fullName evidence="1">Methylenetetrahydrofolate dehydrogenase</fullName>
            <ecNumber evidence="1">1.5.1.5</ecNumber>
        </recommendedName>
    </domain>
    <domain>
        <recommendedName>
            <fullName evidence="1">Methenyltetrahydrofolate cyclohydrolase</fullName>
            <ecNumber evidence="1">3.5.4.9</ecNumber>
        </recommendedName>
    </domain>
</protein>
<sequence>MVEVIDGKLIAASVIQTVKSATAALEMVSGVTTGLAVIIVGDDPASHAYVGSKSRMAKECGFKSVQHTLPAETTQEELAGLVATLNADPSIHGILVQLPLPKPLDSEPIIQSILPEKDVDGLSVVNAGKLATGDLKTGLVSCTPAGAMVFVRRTHGEDLSGLNAVVIGRSNLFGKPMAQLLLNANATVTIAHSRTKNLAEVCRNADILVAAVGRPEMVKADWVKPGATVIDVGINRVPAPEKGEGKTRLVGDVAFREVSEIAGTITPVPGGVGPMTIAMLMANTVIAAHRAAGQVPPKF</sequence>
<gene>
    <name evidence="1" type="primary">folD2</name>
    <name type="ordered locus">RHE_PE00416</name>
</gene>